<reference key="1">
    <citation type="journal article" date="2005" name="PLoS Biol.">
        <title>The genome sequence of Rickettsia felis identifies the first putative conjugative plasmid in an obligate intracellular parasite.</title>
        <authorList>
            <person name="Ogata H."/>
            <person name="Renesto P."/>
            <person name="Audic S."/>
            <person name="Robert C."/>
            <person name="Blanc G."/>
            <person name="Fournier P.-E."/>
            <person name="Parinello H."/>
            <person name="Claverie J.-M."/>
            <person name="Raoult D."/>
        </authorList>
    </citation>
    <scope>NUCLEOTIDE SEQUENCE [LARGE SCALE GENOMIC DNA]</scope>
    <source>
        <strain>ATCC VR-1525 / URRWXCal2</strain>
    </source>
</reference>
<keyword id="KW-0997">Cell inner membrane</keyword>
<keyword id="KW-1003">Cell membrane</keyword>
<keyword id="KW-0472">Membrane</keyword>
<keyword id="KW-0653">Protein transport</keyword>
<keyword id="KW-0811">Translocation</keyword>
<keyword id="KW-0812">Transmembrane</keyword>
<keyword id="KW-1133">Transmembrane helix</keyword>
<keyword id="KW-0813">Transport</keyword>
<proteinExistence type="inferred from homology"/>
<name>SECD_RICFE</name>
<evidence type="ECO:0000255" key="1">
    <source>
        <dbReference type="HAMAP-Rule" id="MF_01463"/>
    </source>
</evidence>
<sequence length="518" mass="56608">MQNLPKWKIFLSIICTVFAVICALPNFMQVNSKFLPHDSVNLGLDLRGGAHLLLDVDFDTYLNDSMENLADTLRKNFREDKIGYKNLLVRQNSIQLEVRSPEELKPLKKIINKIDPEIIAEVNENKIKLSYSESRLNDLLNKVVDQSIEIVRMRVDSTGTKEPTLQKQGDKHILLQVPGEENPSYLKNILGKTAKLTFHLVDENANIEEAVKGHVPVGSMLVKGDSESHREYYVVIKKKVVLGGDQLTTASASFDQNSQAVVAFSFNNLGSKIFGEITKNNTGKRLAIVLDNKLLSAPTINGAIMGGSGIITGNFTVESANELALLLRAGSLPAPLKIIEERSIGPSLGADSIESGKKAGLIGFIAVCIFMVWSYGVLGLFANIALSLALLYILALLSLFQATLTLPGIAGIILTMGMAVDANVLIYERIKEELHKGVSNLYAIRTGFESAFATILDSNLTTLIVAFLLYIFGVGAIKGFAVALTIGIISSMFSAIIITKLLIDIWVKYFIPKKLGLV</sequence>
<accession>Q4UKW3</accession>
<gene>
    <name evidence="1" type="primary">secD</name>
    <name type="ordered locus">RF_0959</name>
</gene>
<comment type="function">
    <text evidence="1">Part of the Sec protein translocase complex. Interacts with the SecYEG preprotein conducting channel. SecDF uses the proton motive force (PMF) to complete protein translocation after the ATP-dependent function of SecA.</text>
</comment>
<comment type="subunit">
    <text evidence="1">Forms a complex with SecF. Part of the essential Sec protein translocation apparatus which comprises SecA, SecYEG and auxiliary proteins SecDF-YajC and YidC.</text>
</comment>
<comment type="subcellular location">
    <subcellularLocation>
        <location evidence="1">Cell inner membrane</location>
        <topology evidence="1">Multi-pass membrane protein</topology>
    </subcellularLocation>
</comment>
<comment type="similarity">
    <text evidence="1">Belongs to the SecD/SecF family. SecD subfamily.</text>
</comment>
<organism>
    <name type="scientific">Rickettsia felis (strain ATCC VR-1525 / URRWXCal2)</name>
    <name type="common">Rickettsia azadi</name>
    <dbReference type="NCBI Taxonomy" id="315456"/>
    <lineage>
        <taxon>Bacteria</taxon>
        <taxon>Pseudomonadati</taxon>
        <taxon>Pseudomonadota</taxon>
        <taxon>Alphaproteobacteria</taxon>
        <taxon>Rickettsiales</taxon>
        <taxon>Rickettsiaceae</taxon>
        <taxon>Rickettsieae</taxon>
        <taxon>Rickettsia</taxon>
        <taxon>spotted fever group</taxon>
    </lineage>
</organism>
<dbReference type="EMBL" id="CP000053">
    <property type="protein sequence ID" value="AAY61810.1"/>
    <property type="molecule type" value="Genomic_DNA"/>
</dbReference>
<dbReference type="SMR" id="Q4UKW3"/>
<dbReference type="STRING" id="315456.RF_0959"/>
<dbReference type="KEGG" id="rfe:RF_0959"/>
<dbReference type="eggNOG" id="COG0342">
    <property type="taxonomic scope" value="Bacteria"/>
</dbReference>
<dbReference type="HOGENOM" id="CLU_007894_4_3_5"/>
<dbReference type="OrthoDB" id="9805019at2"/>
<dbReference type="Proteomes" id="UP000008548">
    <property type="component" value="Chromosome"/>
</dbReference>
<dbReference type="GO" id="GO:0005886">
    <property type="term" value="C:plasma membrane"/>
    <property type="evidence" value="ECO:0007669"/>
    <property type="project" value="UniProtKB-SubCell"/>
</dbReference>
<dbReference type="GO" id="GO:0015450">
    <property type="term" value="F:protein-transporting ATPase activity"/>
    <property type="evidence" value="ECO:0007669"/>
    <property type="project" value="InterPro"/>
</dbReference>
<dbReference type="GO" id="GO:0065002">
    <property type="term" value="P:intracellular protein transmembrane transport"/>
    <property type="evidence" value="ECO:0007669"/>
    <property type="project" value="UniProtKB-UniRule"/>
</dbReference>
<dbReference type="GO" id="GO:0006605">
    <property type="term" value="P:protein targeting"/>
    <property type="evidence" value="ECO:0007669"/>
    <property type="project" value="UniProtKB-UniRule"/>
</dbReference>
<dbReference type="GO" id="GO:0043952">
    <property type="term" value="P:protein transport by the Sec complex"/>
    <property type="evidence" value="ECO:0007669"/>
    <property type="project" value="UniProtKB-UniRule"/>
</dbReference>
<dbReference type="FunFam" id="3.30.1360.200:FF:000002">
    <property type="entry name" value="Preprotein translocase subunit SecD"/>
    <property type="match status" value="1"/>
</dbReference>
<dbReference type="FunFam" id="1.20.1640.10:FF:000004">
    <property type="entry name" value="Protein translocase subunit SecD"/>
    <property type="match status" value="1"/>
</dbReference>
<dbReference type="Gene3D" id="3.30.1360.200">
    <property type="match status" value="1"/>
</dbReference>
<dbReference type="Gene3D" id="3.30.70.3400">
    <property type="match status" value="2"/>
</dbReference>
<dbReference type="Gene3D" id="1.20.1640.10">
    <property type="entry name" value="Multidrug efflux transporter AcrB transmembrane domain"/>
    <property type="match status" value="1"/>
</dbReference>
<dbReference type="HAMAP" id="MF_01463_B">
    <property type="entry name" value="SecD_B"/>
    <property type="match status" value="1"/>
</dbReference>
<dbReference type="InterPro" id="IPR001036">
    <property type="entry name" value="Acrflvin-R"/>
</dbReference>
<dbReference type="InterPro" id="IPR005791">
    <property type="entry name" value="SecD"/>
</dbReference>
<dbReference type="InterPro" id="IPR022813">
    <property type="entry name" value="SecD/SecF_arch_bac"/>
</dbReference>
<dbReference type="InterPro" id="IPR048631">
    <property type="entry name" value="SecD_1st"/>
</dbReference>
<dbReference type="InterPro" id="IPR048634">
    <property type="entry name" value="SecD_SecF_C"/>
</dbReference>
<dbReference type="InterPro" id="IPR055344">
    <property type="entry name" value="SecD_SecF_C_bact"/>
</dbReference>
<dbReference type="InterPro" id="IPR054384">
    <property type="entry name" value="SecDF_P1_head"/>
</dbReference>
<dbReference type="NCBIfam" id="TIGR00916">
    <property type="entry name" value="2A0604s01"/>
    <property type="match status" value="1"/>
</dbReference>
<dbReference type="NCBIfam" id="TIGR01129">
    <property type="entry name" value="secD"/>
    <property type="match status" value="1"/>
</dbReference>
<dbReference type="PANTHER" id="PTHR30081:SF1">
    <property type="entry name" value="PROTEIN TRANSLOCASE SUBUNIT SECD"/>
    <property type="match status" value="1"/>
</dbReference>
<dbReference type="PANTHER" id="PTHR30081">
    <property type="entry name" value="PROTEIN-EXPORT MEMBRANE PROTEIN SEC"/>
    <property type="match status" value="1"/>
</dbReference>
<dbReference type="Pfam" id="PF21760">
    <property type="entry name" value="SecD_1st"/>
    <property type="match status" value="1"/>
</dbReference>
<dbReference type="Pfam" id="PF02355">
    <property type="entry name" value="SecD_SecF_C"/>
    <property type="match status" value="1"/>
</dbReference>
<dbReference type="Pfam" id="PF22599">
    <property type="entry name" value="SecDF_P1_head"/>
    <property type="match status" value="1"/>
</dbReference>
<dbReference type="PRINTS" id="PR00702">
    <property type="entry name" value="ACRIFLAVINRP"/>
</dbReference>
<dbReference type="SUPFAM" id="SSF82866">
    <property type="entry name" value="Multidrug efflux transporter AcrB transmembrane domain"/>
    <property type="match status" value="1"/>
</dbReference>
<feature type="chain" id="PRO_0000272635" description="Protein translocase subunit SecD">
    <location>
        <begin position="1"/>
        <end position="518"/>
    </location>
</feature>
<feature type="transmembrane region" description="Helical" evidence="1">
    <location>
        <begin position="9"/>
        <end position="29"/>
    </location>
</feature>
<feature type="transmembrane region" description="Helical" evidence="1">
    <location>
        <begin position="361"/>
        <end position="381"/>
    </location>
</feature>
<feature type="transmembrane region" description="Helical" evidence="1">
    <location>
        <begin position="384"/>
        <end position="404"/>
    </location>
</feature>
<feature type="transmembrane region" description="Helical" evidence="1">
    <location>
        <begin position="406"/>
        <end position="426"/>
    </location>
</feature>
<feature type="transmembrane region" description="Helical" evidence="1">
    <location>
        <begin position="452"/>
        <end position="474"/>
    </location>
</feature>
<feature type="transmembrane region" description="Helical" evidence="1">
    <location>
        <begin position="486"/>
        <end position="506"/>
    </location>
</feature>
<protein>
    <recommendedName>
        <fullName evidence="1">Protein translocase subunit SecD</fullName>
    </recommendedName>
</protein>